<accession>P0DTI0</accession>
<evidence type="ECO:0000255" key="1"/>
<evidence type="ECO:0000269" key="2">
    <source>
    </source>
</evidence>
<evidence type="ECO:0000303" key="3">
    <source>
    </source>
</evidence>
<gene>
    <name evidence="3" type="primary">pNG4</name>
</gene>
<feature type="chain" id="PRO_0000454437" description="Uncharacterized membrane protein pNG4">
    <location>
        <begin position="1"/>
        <end position="44"/>
    </location>
</feature>
<feature type="transmembrane region" description="Helical" evidence="1">
    <location>
        <begin position="4"/>
        <end position="24"/>
    </location>
</feature>
<organismHost>
    <name type="scientific">Ornithodoros</name>
    <name type="common">relapsing fever ticks</name>
    <dbReference type="NCBI Taxonomy" id="6937"/>
</organismHost>
<organismHost>
    <name type="scientific">Sus scrofa</name>
    <name type="common">Pig</name>
    <dbReference type="NCBI Taxonomy" id="9823"/>
</organismHost>
<name>PNG4_ASFB7</name>
<sequence length="44" mass="4992">MFDISSILIRGGGVLIVVILLLWIVEHNEDFIDAKSMNYNNQTV</sequence>
<dbReference type="EMBL" id="U18466">
    <property type="status" value="NOT_ANNOTATED_CDS"/>
    <property type="molecule type" value="Genomic_DNA"/>
</dbReference>
<dbReference type="SMR" id="P0DTI0"/>
<dbReference type="Proteomes" id="UP000000624">
    <property type="component" value="Segment"/>
</dbReference>
<dbReference type="GO" id="GO:0016020">
    <property type="term" value="C:membrane"/>
    <property type="evidence" value="ECO:0007669"/>
    <property type="project" value="UniProtKB-SubCell"/>
</dbReference>
<protein>
    <recommendedName>
        <fullName>Uncharacterized membrane protein pNG4</fullName>
    </recommendedName>
</protein>
<organism>
    <name type="scientific">African swine fever virus (strain Badajoz 1971 Vero-adapted)</name>
    <name type="common">Ba71V</name>
    <name type="synonym">ASFV</name>
    <dbReference type="NCBI Taxonomy" id="10498"/>
    <lineage>
        <taxon>Viruses</taxon>
        <taxon>Varidnaviria</taxon>
        <taxon>Bamfordvirae</taxon>
        <taxon>Nucleocytoviricota</taxon>
        <taxon>Pokkesviricetes</taxon>
        <taxon>Asfuvirales</taxon>
        <taxon>Asfarviridae</taxon>
        <taxon>Asfivirus</taxon>
        <taxon>African swine fever virus</taxon>
    </lineage>
</organism>
<comment type="subcellular location">
    <subcellularLocation>
        <location evidence="1">Membrane</location>
        <topology evidence="1">Single-pass membrane protein</topology>
    </subcellularLocation>
</comment>
<comment type="induction">
    <text evidence="2">Expressed in the early phase of the viral replicative cycle.</text>
</comment>
<proteinExistence type="evidence at transcript level"/>
<reference key="1">
    <citation type="journal article" date="1995" name="Virology">
        <title>Analysis of the complete nucleotide sequence of African swine fever virus.</title>
        <authorList>
            <person name="Yanez R.J."/>
            <person name="Rodriguez J.M."/>
            <person name="Nogal M.L."/>
            <person name="Yuste L."/>
            <person name="Enriquez C."/>
            <person name="Rodriguez J.F."/>
            <person name="Vinuela E."/>
        </authorList>
    </citation>
    <scope>NUCLEOTIDE SEQUENCE [LARGE SCALE GENOMIC DNA]</scope>
</reference>
<reference key="2">
    <citation type="journal article" date="2020" name="J. Virol.">
        <title>The African Swine Fever Virus Transcriptome.</title>
        <authorList>
            <person name="Cackett G."/>
            <person name="Matelska D."/>
            <person name="Sykora M."/>
            <person name="Portugal R."/>
            <person name="Malecki M."/>
            <person name="Baehler J."/>
            <person name="Dixon L."/>
            <person name="Werner F."/>
        </authorList>
    </citation>
    <scope>IDENTIFICATION</scope>
    <scope>INDUCTION</scope>
</reference>
<keyword id="KW-0244">Early protein</keyword>
<keyword id="KW-0472">Membrane</keyword>
<keyword id="KW-1185">Reference proteome</keyword>
<keyword id="KW-0812">Transmembrane</keyword>
<keyword id="KW-1133">Transmembrane helix</keyword>